<organism>
    <name type="scientific">Acinetobacter baylyi (strain ATCC 33305 / BD413 / ADP1)</name>
    <dbReference type="NCBI Taxonomy" id="62977"/>
    <lineage>
        <taxon>Bacteria</taxon>
        <taxon>Pseudomonadati</taxon>
        <taxon>Pseudomonadota</taxon>
        <taxon>Gammaproteobacteria</taxon>
        <taxon>Moraxellales</taxon>
        <taxon>Moraxellaceae</taxon>
        <taxon>Acinetobacter</taxon>
    </lineage>
</organism>
<name>KGUA_ACIAD</name>
<evidence type="ECO:0000255" key="1">
    <source>
        <dbReference type="HAMAP-Rule" id="MF_00328"/>
    </source>
</evidence>
<comment type="function">
    <text evidence="1">Essential for recycling GMP and indirectly, cGMP.</text>
</comment>
<comment type="catalytic activity">
    <reaction evidence="1">
        <text>GMP + ATP = GDP + ADP</text>
        <dbReference type="Rhea" id="RHEA:20780"/>
        <dbReference type="ChEBI" id="CHEBI:30616"/>
        <dbReference type="ChEBI" id="CHEBI:58115"/>
        <dbReference type="ChEBI" id="CHEBI:58189"/>
        <dbReference type="ChEBI" id="CHEBI:456216"/>
        <dbReference type="EC" id="2.7.4.8"/>
    </reaction>
</comment>
<comment type="subcellular location">
    <subcellularLocation>
        <location evidence="1">Cytoplasm</location>
    </subcellularLocation>
</comment>
<comment type="similarity">
    <text evidence="1">Belongs to the guanylate kinase family.</text>
</comment>
<dbReference type="EC" id="2.7.4.8" evidence="1"/>
<dbReference type="EMBL" id="CR543861">
    <property type="protein sequence ID" value="CAG69995.1"/>
    <property type="molecule type" value="Genomic_DNA"/>
</dbReference>
<dbReference type="RefSeq" id="WP_004923822.1">
    <property type="nucleotide sequence ID" value="NC_005966.1"/>
</dbReference>
<dbReference type="SMR" id="Q6F7H0"/>
<dbReference type="STRING" id="202950.GCA_001485005_02166"/>
<dbReference type="GeneID" id="45235523"/>
<dbReference type="KEGG" id="aci:ACIAD3324"/>
<dbReference type="eggNOG" id="COG0194">
    <property type="taxonomic scope" value="Bacteria"/>
</dbReference>
<dbReference type="HOGENOM" id="CLU_001715_1_0_6"/>
<dbReference type="OrthoDB" id="9808150at2"/>
<dbReference type="BioCyc" id="ASP62977:ACIAD_RS15040-MONOMER"/>
<dbReference type="Proteomes" id="UP000000430">
    <property type="component" value="Chromosome"/>
</dbReference>
<dbReference type="GO" id="GO:0005829">
    <property type="term" value="C:cytosol"/>
    <property type="evidence" value="ECO:0007669"/>
    <property type="project" value="TreeGrafter"/>
</dbReference>
<dbReference type="GO" id="GO:0005524">
    <property type="term" value="F:ATP binding"/>
    <property type="evidence" value="ECO:0007669"/>
    <property type="project" value="UniProtKB-UniRule"/>
</dbReference>
<dbReference type="GO" id="GO:0004385">
    <property type="term" value="F:guanylate kinase activity"/>
    <property type="evidence" value="ECO:0007669"/>
    <property type="project" value="UniProtKB-UniRule"/>
</dbReference>
<dbReference type="CDD" id="cd00071">
    <property type="entry name" value="GMPK"/>
    <property type="match status" value="1"/>
</dbReference>
<dbReference type="FunFam" id="3.30.63.10:FF:000002">
    <property type="entry name" value="Guanylate kinase 1"/>
    <property type="match status" value="1"/>
</dbReference>
<dbReference type="Gene3D" id="3.30.63.10">
    <property type="entry name" value="Guanylate Kinase phosphate binding domain"/>
    <property type="match status" value="1"/>
</dbReference>
<dbReference type="Gene3D" id="3.40.50.300">
    <property type="entry name" value="P-loop containing nucleotide triphosphate hydrolases"/>
    <property type="match status" value="1"/>
</dbReference>
<dbReference type="HAMAP" id="MF_00328">
    <property type="entry name" value="Guanylate_kinase"/>
    <property type="match status" value="1"/>
</dbReference>
<dbReference type="InterPro" id="IPR008145">
    <property type="entry name" value="GK/Ca_channel_bsu"/>
</dbReference>
<dbReference type="InterPro" id="IPR008144">
    <property type="entry name" value="Guanylate_kin-like_dom"/>
</dbReference>
<dbReference type="InterPro" id="IPR017665">
    <property type="entry name" value="Guanylate_kinase"/>
</dbReference>
<dbReference type="InterPro" id="IPR020590">
    <property type="entry name" value="Guanylate_kinase_CS"/>
</dbReference>
<dbReference type="InterPro" id="IPR027417">
    <property type="entry name" value="P-loop_NTPase"/>
</dbReference>
<dbReference type="NCBIfam" id="TIGR03263">
    <property type="entry name" value="guanyl_kin"/>
    <property type="match status" value="1"/>
</dbReference>
<dbReference type="PANTHER" id="PTHR23117:SF13">
    <property type="entry name" value="GUANYLATE KINASE"/>
    <property type="match status" value="1"/>
</dbReference>
<dbReference type="PANTHER" id="PTHR23117">
    <property type="entry name" value="GUANYLATE KINASE-RELATED"/>
    <property type="match status" value="1"/>
</dbReference>
<dbReference type="Pfam" id="PF00625">
    <property type="entry name" value="Guanylate_kin"/>
    <property type="match status" value="1"/>
</dbReference>
<dbReference type="SMART" id="SM00072">
    <property type="entry name" value="GuKc"/>
    <property type="match status" value="1"/>
</dbReference>
<dbReference type="SUPFAM" id="SSF52540">
    <property type="entry name" value="P-loop containing nucleoside triphosphate hydrolases"/>
    <property type="match status" value="1"/>
</dbReference>
<dbReference type="PROSITE" id="PS00856">
    <property type="entry name" value="GUANYLATE_KINASE_1"/>
    <property type="match status" value="1"/>
</dbReference>
<dbReference type="PROSITE" id="PS50052">
    <property type="entry name" value="GUANYLATE_KINASE_2"/>
    <property type="match status" value="1"/>
</dbReference>
<reference key="1">
    <citation type="journal article" date="2004" name="Nucleic Acids Res.">
        <title>Unique features revealed by the genome sequence of Acinetobacter sp. ADP1, a versatile and naturally transformation competent bacterium.</title>
        <authorList>
            <person name="Barbe V."/>
            <person name="Vallenet D."/>
            <person name="Fonknechten N."/>
            <person name="Kreimeyer A."/>
            <person name="Oztas S."/>
            <person name="Labarre L."/>
            <person name="Cruveiller S."/>
            <person name="Robert C."/>
            <person name="Duprat S."/>
            <person name="Wincker P."/>
            <person name="Ornston L.N."/>
            <person name="Weissenbach J."/>
            <person name="Marliere P."/>
            <person name="Cohen G.N."/>
            <person name="Medigue C."/>
        </authorList>
    </citation>
    <scope>NUCLEOTIDE SEQUENCE [LARGE SCALE GENOMIC DNA]</scope>
    <source>
        <strain>ATCC 33305 / BD413 / ADP1</strain>
    </source>
</reference>
<sequence>MSGLLFVVSAASGTGKTSLVKALLERVTNLHVSVSHTTRGQRPGELDGVHYHFTTKENFLSQVEDNGFIEYAEVFGNYYGTSQATVKQQLAKGHDVLLEIDWQGAQQVRRIFPESKQIFILPPSQFDLRQRLSNRGTDAVDVIEHRLSCAVEDMQQYVNFDYIIINDDFNKALHDLESVITANRLMLAQQVQRHHKLIEQLITPNSE</sequence>
<keyword id="KW-0067">ATP-binding</keyword>
<keyword id="KW-0963">Cytoplasm</keyword>
<keyword id="KW-0418">Kinase</keyword>
<keyword id="KW-0547">Nucleotide-binding</keyword>
<keyword id="KW-0808">Transferase</keyword>
<gene>
    <name evidence="1" type="primary">gmk</name>
    <name type="ordered locus">ACIAD3324</name>
</gene>
<feature type="chain" id="PRO_0000170487" description="Guanylate kinase">
    <location>
        <begin position="1"/>
        <end position="207"/>
    </location>
</feature>
<feature type="domain" description="Guanylate kinase-like" evidence="1">
    <location>
        <begin position="3"/>
        <end position="181"/>
    </location>
</feature>
<feature type="binding site" evidence="1">
    <location>
        <begin position="10"/>
        <end position="17"/>
    </location>
    <ligand>
        <name>ATP</name>
        <dbReference type="ChEBI" id="CHEBI:30616"/>
    </ligand>
</feature>
<accession>Q6F7H0</accession>
<protein>
    <recommendedName>
        <fullName evidence="1">Guanylate kinase</fullName>
        <ecNumber evidence="1">2.7.4.8</ecNumber>
    </recommendedName>
    <alternativeName>
        <fullName evidence="1">GMP kinase</fullName>
    </alternativeName>
</protein>
<proteinExistence type="inferred from homology"/>